<feature type="chain" id="PRO_0000309996" description="Large ribosomal subunit protein uL2">
    <location>
        <begin position="1"/>
        <end position="279"/>
    </location>
</feature>
<feature type="region of interest" description="Disordered" evidence="2">
    <location>
        <begin position="224"/>
        <end position="279"/>
    </location>
</feature>
<feature type="compositionally biased region" description="Basic residues" evidence="2">
    <location>
        <begin position="269"/>
        <end position="279"/>
    </location>
</feature>
<comment type="function">
    <text evidence="1">One of the primary rRNA binding proteins. Required for association of the 30S and 50S subunits to form the 70S ribosome, for tRNA binding and peptide bond formation. It has been suggested to have peptidyltransferase activity; this is somewhat controversial. Makes several contacts with the 16S rRNA in the 70S ribosome.</text>
</comment>
<comment type="subunit">
    <text evidence="1">Part of the 50S ribosomal subunit. Forms a bridge to the 30S subunit in the 70S ribosome.</text>
</comment>
<comment type="similarity">
    <text evidence="1">Belongs to the universal ribosomal protein uL2 family.</text>
</comment>
<name>RL2_CERS1</name>
<gene>
    <name evidence="1" type="primary">rplB</name>
    <name type="ordered locus">Rsph17029_0364</name>
</gene>
<reference key="1">
    <citation type="submission" date="2007-02" db="EMBL/GenBank/DDBJ databases">
        <title>Complete sequence of chromosome 1 of Rhodobacter sphaeroides ATCC 17029.</title>
        <authorList>
            <person name="Copeland A."/>
            <person name="Lucas S."/>
            <person name="Lapidus A."/>
            <person name="Barry K."/>
            <person name="Detter J.C."/>
            <person name="Glavina del Rio T."/>
            <person name="Hammon N."/>
            <person name="Israni S."/>
            <person name="Dalin E."/>
            <person name="Tice H."/>
            <person name="Pitluck S."/>
            <person name="Kiss H."/>
            <person name="Brettin T."/>
            <person name="Bruce D."/>
            <person name="Han C."/>
            <person name="Tapia R."/>
            <person name="Gilna P."/>
            <person name="Schmutz J."/>
            <person name="Larimer F."/>
            <person name="Land M."/>
            <person name="Hauser L."/>
            <person name="Kyrpides N."/>
            <person name="Mikhailova N."/>
            <person name="Richardson P."/>
            <person name="Mackenzie C."/>
            <person name="Choudhary M."/>
            <person name="Donohue T.J."/>
            <person name="Kaplan S."/>
        </authorList>
    </citation>
    <scope>NUCLEOTIDE SEQUENCE [LARGE SCALE GENOMIC DNA]</scope>
    <source>
        <strain>ATCC 17029 / ATH 2.4.9</strain>
    </source>
</reference>
<accession>A3PGL4</accession>
<proteinExistence type="inferred from homology"/>
<dbReference type="EMBL" id="CP000577">
    <property type="protein sequence ID" value="ABN75480.1"/>
    <property type="molecule type" value="Genomic_DNA"/>
</dbReference>
<dbReference type="RefSeq" id="WP_002722495.1">
    <property type="nucleotide sequence ID" value="NC_009049.1"/>
</dbReference>
<dbReference type="SMR" id="A3PGL4"/>
<dbReference type="GeneID" id="67445503"/>
<dbReference type="KEGG" id="rsh:Rsph17029_0364"/>
<dbReference type="HOGENOM" id="CLU_036235_2_1_5"/>
<dbReference type="GO" id="GO:0015934">
    <property type="term" value="C:large ribosomal subunit"/>
    <property type="evidence" value="ECO:0007669"/>
    <property type="project" value="InterPro"/>
</dbReference>
<dbReference type="GO" id="GO:0019843">
    <property type="term" value="F:rRNA binding"/>
    <property type="evidence" value="ECO:0007669"/>
    <property type="project" value="UniProtKB-UniRule"/>
</dbReference>
<dbReference type="GO" id="GO:0003735">
    <property type="term" value="F:structural constituent of ribosome"/>
    <property type="evidence" value="ECO:0007669"/>
    <property type="project" value="InterPro"/>
</dbReference>
<dbReference type="GO" id="GO:0016740">
    <property type="term" value="F:transferase activity"/>
    <property type="evidence" value="ECO:0007669"/>
    <property type="project" value="InterPro"/>
</dbReference>
<dbReference type="GO" id="GO:0002181">
    <property type="term" value="P:cytoplasmic translation"/>
    <property type="evidence" value="ECO:0007669"/>
    <property type="project" value="TreeGrafter"/>
</dbReference>
<dbReference type="FunFam" id="2.30.30.30:FF:000001">
    <property type="entry name" value="50S ribosomal protein L2"/>
    <property type="match status" value="1"/>
</dbReference>
<dbReference type="FunFam" id="2.40.50.140:FF:000003">
    <property type="entry name" value="50S ribosomal protein L2"/>
    <property type="match status" value="1"/>
</dbReference>
<dbReference type="FunFam" id="4.10.950.10:FF:000001">
    <property type="entry name" value="50S ribosomal protein L2"/>
    <property type="match status" value="1"/>
</dbReference>
<dbReference type="Gene3D" id="2.30.30.30">
    <property type="match status" value="1"/>
</dbReference>
<dbReference type="Gene3D" id="2.40.50.140">
    <property type="entry name" value="Nucleic acid-binding proteins"/>
    <property type="match status" value="1"/>
</dbReference>
<dbReference type="Gene3D" id="4.10.950.10">
    <property type="entry name" value="Ribosomal protein L2, domain 3"/>
    <property type="match status" value="1"/>
</dbReference>
<dbReference type="HAMAP" id="MF_01320_B">
    <property type="entry name" value="Ribosomal_uL2_B"/>
    <property type="match status" value="1"/>
</dbReference>
<dbReference type="InterPro" id="IPR012340">
    <property type="entry name" value="NA-bd_OB-fold"/>
</dbReference>
<dbReference type="InterPro" id="IPR014722">
    <property type="entry name" value="Rib_uL2_dom2"/>
</dbReference>
<dbReference type="InterPro" id="IPR002171">
    <property type="entry name" value="Ribosomal_uL2"/>
</dbReference>
<dbReference type="InterPro" id="IPR005880">
    <property type="entry name" value="Ribosomal_uL2_bac/org-type"/>
</dbReference>
<dbReference type="InterPro" id="IPR022669">
    <property type="entry name" value="Ribosomal_uL2_C"/>
</dbReference>
<dbReference type="InterPro" id="IPR022671">
    <property type="entry name" value="Ribosomal_uL2_CS"/>
</dbReference>
<dbReference type="InterPro" id="IPR014726">
    <property type="entry name" value="Ribosomal_uL2_dom3"/>
</dbReference>
<dbReference type="InterPro" id="IPR022666">
    <property type="entry name" value="Ribosomal_uL2_RNA-bd_dom"/>
</dbReference>
<dbReference type="InterPro" id="IPR008991">
    <property type="entry name" value="Translation_prot_SH3-like_sf"/>
</dbReference>
<dbReference type="NCBIfam" id="TIGR01171">
    <property type="entry name" value="rplB_bact"/>
    <property type="match status" value="1"/>
</dbReference>
<dbReference type="PANTHER" id="PTHR13691:SF5">
    <property type="entry name" value="LARGE RIBOSOMAL SUBUNIT PROTEIN UL2M"/>
    <property type="match status" value="1"/>
</dbReference>
<dbReference type="PANTHER" id="PTHR13691">
    <property type="entry name" value="RIBOSOMAL PROTEIN L2"/>
    <property type="match status" value="1"/>
</dbReference>
<dbReference type="Pfam" id="PF00181">
    <property type="entry name" value="Ribosomal_L2"/>
    <property type="match status" value="1"/>
</dbReference>
<dbReference type="Pfam" id="PF03947">
    <property type="entry name" value="Ribosomal_L2_C"/>
    <property type="match status" value="1"/>
</dbReference>
<dbReference type="PIRSF" id="PIRSF002158">
    <property type="entry name" value="Ribosomal_L2"/>
    <property type="match status" value="1"/>
</dbReference>
<dbReference type="SMART" id="SM01383">
    <property type="entry name" value="Ribosomal_L2"/>
    <property type="match status" value="1"/>
</dbReference>
<dbReference type="SMART" id="SM01382">
    <property type="entry name" value="Ribosomal_L2_C"/>
    <property type="match status" value="1"/>
</dbReference>
<dbReference type="SUPFAM" id="SSF50249">
    <property type="entry name" value="Nucleic acid-binding proteins"/>
    <property type="match status" value="1"/>
</dbReference>
<dbReference type="SUPFAM" id="SSF50104">
    <property type="entry name" value="Translation proteins SH3-like domain"/>
    <property type="match status" value="1"/>
</dbReference>
<dbReference type="PROSITE" id="PS00467">
    <property type="entry name" value="RIBOSOMAL_L2"/>
    <property type="match status" value="1"/>
</dbReference>
<keyword id="KW-0687">Ribonucleoprotein</keyword>
<keyword id="KW-0689">Ribosomal protein</keyword>
<keyword id="KW-0694">RNA-binding</keyword>
<keyword id="KW-0699">rRNA-binding</keyword>
<protein>
    <recommendedName>
        <fullName evidence="1">Large ribosomal subunit protein uL2</fullName>
    </recommendedName>
    <alternativeName>
        <fullName evidence="3">50S ribosomal protein L2</fullName>
    </alternativeName>
</protein>
<organism>
    <name type="scientific">Cereibacter sphaeroides (strain ATCC 17029 / ATH 2.4.9)</name>
    <name type="common">Rhodobacter sphaeroides</name>
    <dbReference type="NCBI Taxonomy" id="349101"/>
    <lineage>
        <taxon>Bacteria</taxon>
        <taxon>Pseudomonadati</taxon>
        <taxon>Pseudomonadota</taxon>
        <taxon>Alphaproteobacteria</taxon>
        <taxon>Rhodobacterales</taxon>
        <taxon>Paracoccaceae</taxon>
        <taxon>Cereibacter</taxon>
    </lineage>
</organism>
<evidence type="ECO:0000255" key="1">
    <source>
        <dbReference type="HAMAP-Rule" id="MF_01320"/>
    </source>
</evidence>
<evidence type="ECO:0000256" key="2">
    <source>
        <dbReference type="SAM" id="MobiDB-lite"/>
    </source>
</evidence>
<evidence type="ECO:0000305" key="3"/>
<sequence length="279" mass="30369">MALKSYKPTTPGQRGLVLIDRSELWKGRPVKTLVEGLIKTGGRNNTGRVTMWHKGGGAKRLYRIVDFKRRKFDVPAVVERIEYDPNRTAFIALVRYEDGELAYILAPQRLAVGDSVVAGVKTDVKPGNAMPFSGMPIGTIVHNVELKPGKGGQLARAAGTYAQFVGRDGGYAQIRLSSGELRMVRQECMATVGAVSNPDNSNQNFGKAGRMRHKGVRPTVRGVAMNPIDHPHGGGEGRTSGGRHPVTPWGKGTKGNRTRKSKASDKLIVRSRHAKKKGR</sequence>